<feature type="chain" id="PRO_0000214591" description="UPF0260 protein YcgN">
    <location>
        <begin position="1"/>
        <end position="153"/>
    </location>
</feature>
<sequence>MADTLMSDTPFWQRKTLDEMTDAEWESLCDGCGQCCLHKLMDEDTDEIYFTNVACRQLNIKTCQCRHYERRFEFEPDCIKLTRENLPDFEWLPMTCAYRLLAEGKPLPTWHPLQTGSKAAMHGERISVRHIAVKESEVRDWQDHILNKPSWAE</sequence>
<comment type="similarity">
    <text evidence="1">Belongs to the UPF0260 family.</text>
</comment>
<organism>
    <name type="scientific">Salmonella typhi</name>
    <dbReference type="NCBI Taxonomy" id="90370"/>
    <lineage>
        <taxon>Bacteria</taxon>
        <taxon>Pseudomonadati</taxon>
        <taxon>Pseudomonadota</taxon>
        <taxon>Gammaproteobacteria</taxon>
        <taxon>Enterobacterales</taxon>
        <taxon>Enterobacteriaceae</taxon>
        <taxon>Salmonella</taxon>
    </lineage>
</organism>
<accession>Q8Z682</accession>
<name>YCGN_SALTI</name>
<gene>
    <name evidence="1" type="primary">ycgN</name>
    <name type="ordered locus">STY1941</name>
    <name type="ordered locus">t1066</name>
</gene>
<reference key="1">
    <citation type="journal article" date="2001" name="Nature">
        <title>Complete genome sequence of a multiple drug resistant Salmonella enterica serovar Typhi CT18.</title>
        <authorList>
            <person name="Parkhill J."/>
            <person name="Dougan G."/>
            <person name="James K.D."/>
            <person name="Thomson N.R."/>
            <person name="Pickard D."/>
            <person name="Wain J."/>
            <person name="Churcher C.M."/>
            <person name="Mungall K.L."/>
            <person name="Bentley S.D."/>
            <person name="Holden M.T.G."/>
            <person name="Sebaihia M."/>
            <person name="Baker S."/>
            <person name="Basham D."/>
            <person name="Brooks K."/>
            <person name="Chillingworth T."/>
            <person name="Connerton P."/>
            <person name="Cronin A."/>
            <person name="Davis P."/>
            <person name="Davies R.M."/>
            <person name="Dowd L."/>
            <person name="White N."/>
            <person name="Farrar J."/>
            <person name="Feltwell T."/>
            <person name="Hamlin N."/>
            <person name="Haque A."/>
            <person name="Hien T.T."/>
            <person name="Holroyd S."/>
            <person name="Jagels K."/>
            <person name="Krogh A."/>
            <person name="Larsen T.S."/>
            <person name="Leather S."/>
            <person name="Moule S."/>
            <person name="O'Gaora P."/>
            <person name="Parry C."/>
            <person name="Quail M.A."/>
            <person name="Rutherford K.M."/>
            <person name="Simmonds M."/>
            <person name="Skelton J."/>
            <person name="Stevens K."/>
            <person name="Whitehead S."/>
            <person name="Barrell B.G."/>
        </authorList>
    </citation>
    <scope>NUCLEOTIDE SEQUENCE [LARGE SCALE GENOMIC DNA]</scope>
    <source>
        <strain>CT18</strain>
    </source>
</reference>
<reference key="2">
    <citation type="journal article" date="2003" name="J. Bacteriol.">
        <title>Comparative genomics of Salmonella enterica serovar Typhi strains Ty2 and CT18.</title>
        <authorList>
            <person name="Deng W."/>
            <person name="Liou S.-R."/>
            <person name="Plunkett G. III"/>
            <person name="Mayhew G.F."/>
            <person name="Rose D.J."/>
            <person name="Burland V."/>
            <person name="Kodoyianni V."/>
            <person name="Schwartz D.C."/>
            <person name="Blattner F.R."/>
        </authorList>
    </citation>
    <scope>NUCLEOTIDE SEQUENCE [LARGE SCALE GENOMIC DNA]</scope>
    <source>
        <strain>ATCC 700931 / Ty2</strain>
    </source>
</reference>
<evidence type="ECO:0000255" key="1">
    <source>
        <dbReference type="HAMAP-Rule" id="MF_00676"/>
    </source>
</evidence>
<proteinExistence type="inferred from homology"/>
<protein>
    <recommendedName>
        <fullName evidence="1">UPF0260 protein YcgN</fullName>
    </recommendedName>
</protein>
<dbReference type="EMBL" id="AL513382">
    <property type="protein sequence ID" value="CAD05494.1"/>
    <property type="molecule type" value="Genomic_DNA"/>
</dbReference>
<dbReference type="EMBL" id="AE014613">
    <property type="protein sequence ID" value="AAO68732.1"/>
    <property type="molecule type" value="Genomic_DNA"/>
</dbReference>
<dbReference type="RefSeq" id="NP_456318.3">
    <property type="nucleotide sequence ID" value="NC_003198.1"/>
</dbReference>
<dbReference type="STRING" id="220341.gene:17585859"/>
<dbReference type="KEGG" id="stt:t1066"/>
<dbReference type="KEGG" id="sty:STY1941"/>
<dbReference type="PATRIC" id="fig|220341.7.peg.1958"/>
<dbReference type="eggNOG" id="COG2983">
    <property type="taxonomic scope" value="Bacteria"/>
</dbReference>
<dbReference type="HOGENOM" id="CLU_109769_2_0_6"/>
<dbReference type="OMA" id="TCQCSDY"/>
<dbReference type="OrthoDB" id="9786855at2"/>
<dbReference type="Proteomes" id="UP000000541">
    <property type="component" value="Chromosome"/>
</dbReference>
<dbReference type="Proteomes" id="UP000002670">
    <property type="component" value="Chromosome"/>
</dbReference>
<dbReference type="HAMAP" id="MF_00676">
    <property type="entry name" value="UPF0260"/>
    <property type="match status" value="1"/>
</dbReference>
<dbReference type="InterPro" id="IPR005358">
    <property type="entry name" value="Puta_zinc/iron-chelating_dom"/>
</dbReference>
<dbReference type="InterPro" id="IPR008228">
    <property type="entry name" value="UCP006173"/>
</dbReference>
<dbReference type="NCBIfam" id="NF003498">
    <property type="entry name" value="PRK05170.1-1"/>
    <property type="match status" value="1"/>
</dbReference>
<dbReference type="NCBIfam" id="NF003501">
    <property type="entry name" value="PRK05170.1-5"/>
    <property type="match status" value="1"/>
</dbReference>
<dbReference type="NCBIfam" id="NF003503">
    <property type="entry name" value="PRK05170.2-1"/>
    <property type="match status" value="1"/>
</dbReference>
<dbReference type="NCBIfam" id="NF003507">
    <property type="entry name" value="PRK05170.2-5"/>
    <property type="match status" value="1"/>
</dbReference>
<dbReference type="PANTHER" id="PTHR37421">
    <property type="entry name" value="UPF0260 PROTEIN YCGN"/>
    <property type="match status" value="1"/>
</dbReference>
<dbReference type="PANTHER" id="PTHR37421:SF1">
    <property type="entry name" value="UPF0260 PROTEIN YCGN"/>
    <property type="match status" value="1"/>
</dbReference>
<dbReference type="Pfam" id="PF03692">
    <property type="entry name" value="CxxCxxCC"/>
    <property type="match status" value="1"/>
</dbReference>
<dbReference type="PIRSF" id="PIRSF006173">
    <property type="entry name" value="UCP006173"/>
    <property type="match status" value="1"/>
</dbReference>